<proteinExistence type="inferred from homology"/>
<keyword id="KW-0012">Acyltransferase</keyword>
<keyword id="KW-0963">Cytoplasm</keyword>
<keyword id="KW-1185">Reference proteome</keyword>
<keyword id="KW-0808">Transferase</keyword>
<dbReference type="EC" id="2.3.2.29" evidence="1"/>
<dbReference type="EMBL" id="AE003852">
    <property type="protein sequence ID" value="AAF94886.1"/>
    <property type="molecule type" value="Genomic_DNA"/>
</dbReference>
<dbReference type="PIR" id="H82163">
    <property type="entry name" value="H82163"/>
</dbReference>
<dbReference type="RefSeq" id="NP_231372.1">
    <property type="nucleotide sequence ID" value="NC_002505.1"/>
</dbReference>
<dbReference type="RefSeq" id="WP_000093315.1">
    <property type="nucleotide sequence ID" value="NZ_LT906614.1"/>
</dbReference>
<dbReference type="SMR" id="Q9KRA6"/>
<dbReference type="STRING" id="243277.VC_1736"/>
<dbReference type="DNASU" id="2613741"/>
<dbReference type="EnsemblBacteria" id="AAF94886">
    <property type="protein sequence ID" value="AAF94886"/>
    <property type="gene ID" value="VC_1736"/>
</dbReference>
<dbReference type="KEGG" id="vch:VC_1736"/>
<dbReference type="PATRIC" id="fig|243277.26.peg.1659"/>
<dbReference type="eggNOG" id="COG2935">
    <property type="taxonomic scope" value="Bacteria"/>
</dbReference>
<dbReference type="HOGENOM" id="CLU_077607_0_0_6"/>
<dbReference type="Proteomes" id="UP000000584">
    <property type="component" value="Chromosome 1"/>
</dbReference>
<dbReference type="GO" id="GO:0005737">
    <property type="term" value="C:cytoplasm"/>
    <property type="evidence" value="ECO:0000318"/>
    <property type="project" value="GO_Central"/>
</dbReference>
<dbReference type="GO" id="GO:0004057">
    <property type="term" value="F:arginyl-tRNA--protein transferase activity"/>
    <property type="evidence" value="ECO:0000318"/>
    <property type="project" value="GO_Central"/>
</dbReference>
<dbReference type="GO" id="GO:0008914">
    <property type="term" value="F:leucyl-tRNA--protein transferase activity"/>
    <property type="evidence" value="ECO:0007669"/>
    <property type="project" value="UniProtKB-UniRule"/>
</dbReference>
<dbReference type="GO" id="GO:0010498">
    <property type="term" value="P:proteasomal protein catabolic process"/>
    <property type="evidence" value="ECO:0000318"/>
    <property type="project" value="GO_Central"/>
</dbReference>
<dbReference type="GO" id="GO:0071596">
    <property type="term" value="P:ubiquitin-dependent protein catabolic process via the N-end rule pathway"/>
    <property type="evidence" value="ECO:0007669"/>
    <property type="project" value="InterPro"/>
</dbReference>
<dbReference type="HAMAP" id="MF_00689">
    <property type="entry name" value="Bpt"/>
    <property type="match status" value="1"/>
</dbReference>
<dbReference type="InterPro" id="IPR016181">
    <property type="entry name" value="Acyl_CoA_acyltransferase"/>
</dbReference>
<dbReference type="InterPro" id="IPR017138">
    <property type="entry name" value="Asp_Glu_LeuTrfase"/>
</dbReference>
<dbReference type="InterPro" id="IPR030700">
    <property type="entry name" value="N-end_Aminoacyl_Trfase"/>
</dbReference>
<dbReference type="InterPro" id="IPR007472">
    <property type="entry name" value="N-end_Aminoacyl_Trfase_C"/>
</dbReference>
<dbReference type="InterPro" id="IPR007471">
    <property type="entry name" value="N-end_Aminoacyl_Trfase_N"/>
</dbReference>
<dbReference type="NCBIfam" id="NF002342">
    <property type="entry name" value="PRK01305.1-3"/>
    <property type="match status" value="1"/>
</dbReference>
<dbReference type="NCBIfam" id="NF002345">
    <property type="entry name" value="PRK01305.2-2"/>
    <property type="match status" value="1"/>
</dbReference>
<dbReference type="NCBIfam" id="NF002346">
    <property type="entry name" value="PRK01305.2-3"/>
    <property type="match status" value="1"/>
</dbReference>
<dbReference type="PANTHER" id="PTHR21367">
    <property type="entry name" value="ARGININE-TRNA-PROTEIN TRANSFERASE 1"/>
    <property type="match status" value="1"/>
</dbReference>
<dbReference type="PANTHER" id="PTHR21367:SF1">
    <property type="entry name" value="ARGINYL-TRNA--PROTEIN TRANSFERASE 1"/>
    <property type="match status" value="1"/>
</dbReference>
<dbReference type="Pfam" id="PF04377">
    <property type="entry name" value="ATE_C"/>
    <property type="match status" value="1"/>
</dbReference>
<dbReference type="Pfam" id="PF04376">
    <property type="entry name" value="ATE_N"/>
    <property type="match status" value="1"/>
</dbReference>
<dbReference type="PIRSF" id="PIRSF037208">
    <property type="entry name" value="ATE_pro_prd"/>
    <property type="match status" value="1"/>
</dbReference>
<dbReference type="SUPFAM" id="SSF55729">
    <property type="entry name" value="Acyl-CoA N-acyltransferases (Nat)"/>
    <property type="match status" value="1"/>
</dbReference>
<protein>
    <recommendedName>
        <fullName evidence="1">Aspartate/glutamate leucyltransferase</fullName>
        <ecNumber evidence="1">2.3.2.29</ecNumber>
    </recommendedName>
</protein>
<evidence type="ECO:0000255" key="1">
    <source>
        <dbReference type="HAMAP-Rule" id="MF_00689"/>
    </source>
</evidence>
<reference key="1">
    <citation type="journal article" date="2000" name="Nature">
        <title>DNA sequence of both chromosomes of the cholera pathogen Vibrio cholerae.</title>
        <authorList>
            <person name="Heidelberg J.F."/>
            <person name="Eisen J.A."/>
            <person name="Nelson W.C."/>
            <person name="Clayton R.A."/>
            <person name="Gwinn M.L."/>
            <person name="Dodson R.J."/>
            <person name="Haft D.H."/>
            <person name="Hickey E.K."/>
            <person name="Peterson J.D."/>
            <person name="Umayam L.A."/>
            <person name="Gill S.R."/>
            <person name="Nelson K.E."/>
            <person name="Read T.D."/>
            <person name="Tettelin H."/>
            <person name="Richardson D.L."/>
            <person name="Ermolaeva M.D."/>
            <person name="Vamathevan J.J."/>
            <person name="Bass S."/>
            <person name="Qin H."/>
            <person name="Dragoi I."/>
            <person name="Sellers P."/>
            <person name="McDonald L.A."/>
            <person name="Utterback T.R."/>
            <person name="Fleischmann R.D."/>
            <person name="Nierman W.C."/>
            <person name="White O."/>
            <person name="Salzberg S.L."/>
            <person name="Smith H.O."/>
            <person name="Colwell R.R."/>
            <person name="Mekalanos J.J."/>
            <person name="Venter J.C."/>
            <person name="Fraser C.M."/>
        </authorList>
    </citation>
    <scope>NUCLEOTIDE SEQUENCE [LARGE SCALE GENOMIC DNA]</scope>
    <source>
        <strain>ATCC 39315 / El Tor Inaba N16961</strain>
    </source>
</reference>
<feature type="chain" id="PRO_0000195117" description="Aspartate/glutamate leucyltransferase">
    <location>
        <begin position="1"/>
        <end position="233"/>
    </location>
</feature>
<comment type="function">
    <text evidence="1">Functions in the N-end rule pathway of protein degradation where it conjugates Leu from its aminoacyl-tRNA to the N-termini of proteins containing an N-terminal aspartate or glutamate.</text>
</comment>
<comment type="catalytic activity">
    <reaction evidence="1">
        <text>N-terminal L-glutamyl-[protein] + L-leucyl-tRNA(Leu) = N-terminal L-leucyl-L-glutamyl-[protein] + tRNA(Leu) + H(+)</text>
        <dbReference type="Rhea" id="RHEA:50412"/>
        <dbReference type="Rhea" id="RHEA-COMP:9613"/>
        <dbReference type="Rhea" id="RHEA-COMP:9622"/>
        <dbReference type="Rhea" id="RHEA-COMP:12664"/>
        <dbReference type="Rhea" id="RHEA-COMP:12668"/>
        <dbReference type="ChEBI" id="CHEBI:15378"/>
        <dbReference type="ChEBI" id="CHEBI:64721"/>
        <dbReference type="ChEBI" id="CHEBI:78442"/>
        <dbReference type="ChEBI" id="CHEBI:78494"/>
        <dbReference type="ChEBI" id="CHEBI:133041"/>
        <dbReference type="EC" id="2.3.2.29"/>
    </reaction>
</comment>
<comment type="catalytic activity">
    <reaction evidence="1">
        <text>N-terminal L-aspartyl-[protein] + L-leucyl-tRNA(Leu) = N-terminal L-leucyl-L-aspartyl-[protein] + tRNA(Leu) + H(+)</text>
        <dbReference type="Rhea" id="RHEA:50420"/>
        <dbReference type="Rhea" id="RHEA-COMP:9613"/>
        <dbReference type="Rhea" id="RHEA-COMP:9622"/>
        <dbReference type="Rhea" id="RHEA-COMP:12669"/>
        <dbReference type="Rhea" id="RHEA-COMP:12674"/>
        <dbReference type="ChEBI" id="CHEBI:15378"/>
        <dbReference type="ChEBI" id="CHEBI:64720"/>
        <dbReference type="ChEBI" id="CHEBI:78442"/>
        <dbReference type="ChEBI" id="CHEBI:78494"/>
        <dbReference type="ChEBI" id="CHEBI:133042"/>
        <dbReference type="EC" id="2.3.2.29"/>
    </reaction>
</comment>
<comment type="subcellular location">
    <subcellularLocation>
        <location evidence="1">Cytoplasm</location>
    </subcellularLocation>
</comment>
<comment type="similarity">
    <text evidence="1">Belongs to the R-transferase family. Bpt subfamily.</text>
</comment>
<gene>
    <name evidence="1" type="primary">bpt</name>
    <name type="ordered locus">VC_1736</name>
</gene>
<name>BPT_VIBCH</name>
<organism>
    <name type="scientific">Vibrio cholerae serotype O1 (strain ATCC 39315 / El Tor Inaba N16961)</name>
    <dbReference type="NCBI Taxonomy" id="243277"/>
    <lineage>
        <taxon>Bacteria</taxon>
        <taxon>Pseudomonadati</taxon>
        <taxon>Pseudomonadota</taxon>
        <taxon>Gammaproteobacteria</taxon>
        <taxon>Vibrionales</taxon>
        <taxon>Vibrionaceae</taxon>
        <taxon>Vibrio</taxon>
    </lineage>
</organism>
<sequence length="233" mass="27350">MSSDIQQIRIGLTNNHPCSYLADRMERVAVAIDPQMQTPETYEVLMANGFRRSGDTIYKPHCDHCQSCQALRIPAPDFVPSKSQKRLLKLLSQEFHWQLKPELDEDWYTLYARYIFARHRHGSMYPPNKMEFAKFARAKWLNTQYLHLYQGEKLVAIAVTDLLPNSASAFYTFYDPDISISLGTLAVLCQLNYCQQTKKQWLYLGYQIDECPAMNYKVRFNPHQRLVNQRWRG</sequence>
<accession>Q9KRA6</accession>